<accession>P62771</accession>
<accession>P37048</accession>
<organism>
    <name type="scientific">Shigella flexneri</name>
    <dbReference type="NCBI Taxonomy" id="623"/>
    <lineage>
        <taxon>Bacteria</taxon>
        <taxon>Pseudomonadati</taxon>
        <taxon>Pseudomonadota</taxon>
        <taxon>Gammaproteobacteria</taxon>
        <taxon>Enterobacterales</taxon>
        <taxon>Enterobacteriaceae</taxon>
        <taxon>Shigella</taxon>
    </lineage>
</organism>
<dbReference type="EMBL" id="AE005674">
    <property type="protein sequence ID" value="AAN41817.1"/>
    <property type="molecule type" value="Genomic_DNA"/>
</dbReference>
<dbReference type="EMBL" id="AE014073">
    <property type="protein sequence ID" value="AAP15698.1"/>
    <property type="molecule type" value="Genomic_DNA"/>
</dbReference>
<dbReference type="RefSeq" id="NP_706110.1">
    <property type="nucleotide sequence ID" value="NC_004337.2"/>
</dbReference>
<dbReference type="RefSeq" id="WP_000272188.1">
    <property type="nucleotide sequence ID" value="NZ_WPGW01000006.1"/>
</dbReference>
<dbReference type="SMR" id="P62771"/>
<dbReference type="STRING" id="198214.SF0155"/>
<dbReference type="PaxDb" id="198214-SF0155"/>
<dbReference type="GeneID" id="1025961"/>
<dbReference type="KEGG" id="sfl:SF0155"/>
<dbReference type="KEGG" id="sfx:S0158"/>
<dbReference type="PATRIC" id="fig|198214.7.peg.175"/>
<dbReference type="HOGENOM" id="CLU_136774_0_0_6"/>
<dbReference type="Proteomes" id="UP000001006">
    <property type="component" value="Chromosome"/>
</dbReference>
<dbReference type="Proteomes" id="UP000002673">
    <property type="component" value="Chromosome"/>
</dbReference>
<dbReference type="HAMAP" id="MF_01519">
    <property type="entry name" value="UPF0325"/>
    <property type="match status" value="1"/>
</dbReference>
<dbReference type="InterPro" id="IPR020911">
    <property type="entry name" value="UPF0325"/>
</dbReference>
<dbReference type="NCBIfam" id="NF010213">
    <property type="entry name" value="PRK13677.1"/>
    <property type="match status" value="1"/>
</dbReference>
<dbReference type="Pfam" id="PF11944">
    <property type="entry name" value="DUF3461"/>
    <property type="match status" value="1"/>
</dbReference>
<protein>
    <recommendedName>
        <fullName evidence="1">UPF0325 protein YaeH</fullName>
    </recommendedName>
</protein>
<reference key="1">
    <citation type="journal article" date="2002" name="Nucleic Acids Res.">
        <title>Genome sequence of Shigella flexneri 2a: insights into pathogenicity through comparison with genomes of Escherichia coli K12 and O157.</title>
        <authorList>
            <person name="Jin Q."/>
            <person name="Yuan Z."/>
            <person name="Xu J."/>
            <person name="Wang Y."/>
            <person name="Shen Y."/>
            <person name="Lu W."/>
            <person name="Wang J."/>
            <person name="Liu H."/>
            <person name="Yang J."/>
            <person name="Yang F."/>
            <person name="Zhang X."/>
            <person name="Zhang J."/>
            <person name="Yang G."/>
            <person name="Wu H."/>
            <person name="Qu D."/>
            <person name="Dong J."/>
            <person name="Sun L."/>
            <person name="Xue Y."/>
            <person name="Zhao A."/>
            <person name="Gao Y."/>
            <person name="Zhu J."/>
            <person name="Kan B."/>
            <person name="Ding K."/>
            <person name="Chen S."/>
            <person name="Cheng H."/>
            <person name="Yao Z."/>
            <person name="He B."/>
            <person name="Chen R."/>
            <person name="Ma D."/>
            <person name="Qiang B."/>
            <person name="Wen Y."/>
            <person name="Hou Y."/>
            <person name="Yu J."/>
        </authorList>
    </citation>
    <scope>NUCLEOTIDE SEQUENCE [LARGE SCALE GENOMIC DNA]</scope>
    <source>
        <strain>301 / Serotype 2a</strain>
    </source>
</reference>
<reference key="2">
    <citation type="journal article" date="2003" name="Infect. Immun.">
        <title>Complete genome sequence and comparative genomics of Shigella flexneri serotype 2a strain 2457T.</title>
        <authorList>
            <person name="Wei J."/>
            <person name="Goldberg M.B."/>
            <person name="Burland V."/>
            <person name="Venkatesan M.M."/>
            <person name="Deng W."/>
            <person name="Fournier G."/>
            <person name="Mayhew G.F."/>
            <person name="Plunkett G. III"/>
            <person name="Rose D.J."/>
            <person name="Darling A."/>
            <person name="Mau B."/>
            <person name="Perna N.T."/>
            <person name="Payne S.M."/>
            <person name="Runyen-Janecky L.J."/>
            <person name="Zhou S."/>
            <person name="Schwartz D.C."/>
            <person name="Blattner F.R."/>
        </authorList>
    </citation>
    <scope>NUCLEOTIDE SEQUENCE [LARGE SCALE GENOMIC DNA]</scope>
    <source>
        <strain>ATCC 700930 / 2457T / Serotype 2a</strain>
    </source>
</reference>
<evidence type="ECO:0000255" key="1">
    <source>
        <dbReference type="HAMAP-Rule" id="MF_01519"/>
    </source>
</evidence>
<keyword id="KW-1185">Reference proteome</keyword>
<sequence length="128" mass="15096">MYDNLKSLGITNPEEIDRYSLRQEANNDILKIYFQKDKGEFFAKSVKFKYPRQRKTVVADGVGQGYKEVQEISPNLRYIIDELDQICQRDRSEVDLKRKILDDLRHLESVVTNKISEIEADLEKLTRK</sequence>
<feature type="chain" id="PRO_0000211845" description="UPF0325 protein YaeH">
    <location>
        <begin position="1"/>
        <end position="128"/>
    </location>
</feature>
<gene>
    <name evidence="1" type="primary">yaeH</name>
    <name type="ordered locus">SF0155</name>
    <name type="ordered locus">S0158</name>
</gene>
<comment type="similarity">
    <text evidence="1">Belongs to the UPF0325 family.</text>
</comment>
<proteinExistence type="inferred from homology"/>
<name>YAEH_SHIFL</name>